<dbReference type="EMBL" id="AF130464">
    <property type="protein sequence ID" value="AAD28756.2"/>
    <property type="molecule type" value="mRNA"/>
</dbReference>
<dbReference type="EMBL" id="AB018298">
    <property type="protein sequence ID" value="BAA34475.2"/>
    <property type="status" value="ALT_INIT"/>
    <property type="molecule type" value="mRNA"/>
</dbReference>
<dbReference type="EMBL" id="CH471229">
    <property type="protein sequence ID" value="EAW73656.1"/>
    <property type="molecule type" value="Genomic_DNA"/>
</dbReference>
<dbReference type="EMBL" id="BC035761">
    <property type="protein sequence ID" value="AAH35761.1"/>
    <property type="molecule type" value="mRNA"/>
</dbReference>
<dbReference type="CCDS" id="CCDS3710.1">
    <molecule id="O94855-1"/>
</dbReference>
<dbReference type="RefSeq" id="NP_001304995.1">
    <molecule id="O94855-2"/>
    <property type="nucleotide sequence ID" value="NM_001318066.2"/>
</dbReference>
<dbReference type="RefSeq" id="NP_055637.2">
    <molecule id="O94855-1"/>
    <property type="nucleotide sequence ID" value="NM_014822.4"/>
</dbReference>
<dbReference type="RefSeq" id="XP_005263436.1">
    <property type="nucleotide sequence ID" value="XM_005263379.2"/>
</dbReference>
<dbReference type="PDB" id="3EFO">
    <property type="method" value="X-ray"/>
    <property type="resolution" value="2.70 A"/>
    <property type="chains" value="B=266-1032"/>
</dbReference>
<dbReference type="PDB" id="3EG9">
    <property type="method" value="X-ray"/>
    <property type="resolution" value="3.00 A"/>
    <property type="chains" value="B=266-1032"/>
</dbReference>
<dbReference type="PDB" id="5KYU">
    <property type="method" value="X-ray"/>
    <property type="resolution" value="3.51 A"/>
    <property type="chains" value="B=266-1032"/>
</dbReference>
<dbReference type="PDB" id="5KYW">
    <property type="method" value="X-ray"/>
    <property type="resolution" value="3.20 A"/>
    <property type="chains" value="B=266-1032"/>
</dbReference>
<dbReference type="PDB" id="5KYX">
    <property type="method" value="X-ray"/>
    <property type="resolution" value="3.52 A"/>
    <property type="chains" value="B=266-1032"/>
</dbReference>
<dbReference type="PDB" id="5KYY">
    <property type="method" value="X-ray"/>
    <property type="resolution" value="3.40 A"/>
    <property type="chains" value="B=266-1032"/>
</dbReference>
<dbReference type="PDBsum" id="3EFO"/>
<dbReference type="PDBsum" id="3EG9"/>
<dbReference type="PDBsum" id="5KYU"/>
<dbReference type="PDBsum" id="5KYW"/>
<dbReference type="PDBsum" id="5KYX"/>
<dbReference type="PDBsum" id="5KYY"/>
<dbReference type="SMR" id="O94855"/>
<dbReference type="BioGRID" id="115204">
    <property type="interactions" value="59"/>
</dbReference>
<dbReference type="ComplexPortal" id="CPX-2360">
    <property type="entry name" value="COPII vesicle coat complex"/>
</dbReference>
<dbReference type="FunCoup" id="O94855">
    <property type="interactions" value="2484"/>
</dbReference>
<dbReference type="IntAct" id="O94855">
    <property type="interactions" value="28"/>
</dbReference>
<dbReference type="MINT" id="O94855"/>
<dbReference type="STRING" id="9606.ENSP00000280551"/>
<dbReference type="GlyGen" id="O94855">
    <property type="glycosylation" value="8 sites, 2 N-linked glycans (2 sites), 1 O-linked glycan (6 sites)"/>
</dbReference>
<dbReference type="iPTMnet" id="O94855"/>
<dbReference type="MetOSite" id="O94855"/>
<dbReference type="PhosphoSitePlus" id="O94855"/>
<dbReference type="SwissPalm" id="O94855"/>
<dbReference type="BioMuta" id="SEC24D"/>
<dbReference type="jPOST" id="O94855"/>
<dbReference type="MassIVE" id="O94855"/>
<dbReference type="PaxDb" id="9606-ENSP00000280551"/>
<dbReference type="PeptideAtlas" id="O94855"/>
<dbReference type="ProteomicsDB" id="50488">
    <molecule id="O94855-1"/>
</dbReference>
<dbReference type="ProteomicsDB" id="50489">
    <molecule id="O94855-2"/>
</dbReference>
<dbReference type="Pumba" id="O94855"/>
<dbReference type="Antibodypedia" id="26618">
    <property type="antibodies" value="115 antibodies from 25 providers"/>
</dbReference>
<dbReference type="DNASU" id="9871"/>
<dbReference type="Ensembl" id="ENST00000280551.11">
    <molecule id="O94855-1"/>
    <property type="protein sequence ID" value="ENSP00000280551.6"/>
    <property type="gene ID" value="ENSG00000150961.15"/>
</dbReference>
<dbReference type="GeneID" id="9871"/>
<dbReference type="KEGG" id="hsa:9871"/>
<dbReference type="MANE-Select" id="ENST00000280551.11">
    <property type="protein sequence ID" value="ENSP00000280551.6"/>
    <property type="RefSeq nucleotide sequence ID" value="NM_014822.4"/>
    <property type="RefSeq protein sequence ID" value="NP_055637.2"/>
</dbReference>
<dbReference type="UCSC" id="uc003ici.5">
    <molecule id="O94855-1"/>
    <property type="organism name" value="human"/>
</dbReference>
<dbReference type="AGR" id="HGNC:10706"/>
<dbReference type="CTD" id="9871"/>
<dbReference type="DisGeNET" id="9871"/>
<dbReference type="GeneCards" id="SEC24D"/>
<dbReference type="HGNC" id="HGNC:10706">
    <property type="gene designation" value="SEC24D"/>
</dbReference>
<dbReference type="HPA" id="ENSG00000150961">
    <property type="expression patterns" value="Low tissue specificity"/>
</dbReference>
<dbReference type="MalaCards" id="SEC24D"/>
<dbReference type="MIM" id="607186">
    <property type="type" value="gene"/>
</dbReference>
<dbReference type="MIM" id="616294">
    <property type="type" value="phenotype"/>
</dbReference>
<dbReference type="neXtProt" id="NX_O94855"/>
<dbReference type="OpenTargets" id="ENSG00000150961"/>
<dbReference type="Orphanet" id="2050">
    <property type="disease" value="Cole-Carpenter syndrome"/>
</dbReference>
<dbReference type="Orphanet" id="216796">
    <property type="disease" value="Osteogenesis imperfecta type 1"/>
</dbReference>
<dbReference type="PharmGKB" id="PA35629"/>
<dbReference type="VEuPathDB" id="HostDB:ENSG00000150961"/>
<dbReference type="eggNOG" id="KOG1984">
    <property type="taxonomic scope" value="Eukaryota"/>
</dbReference>
<dbReference type="GeneTree" id="ENSGT00950000182924"/>
<dbReference type="HOGENOM" id="CLU_004589_1_1_1"/>
<dbReference type="InParanoid" id="O94855"/>
<dbReference type="OMA" id="RLCKHGD"/>
<dbReference type="OrthoDB" id="49016at2759"/>
<dbReference type="PAN-GO" id="O94855">
    <property type="GO annotations" value="5 GO annotations based on evolutionary models"/>
</dbReference>
<dbReference type="PhylomeDB" id="O94855"/>
<dbReference type="TreeFam" id="TF300464"/>
<dbReference type="PathwayCommons" id="O94855"/>
<dbReference type="Reactome" id="R-HSA-1655829">
    <property type="pathway name" value="Regulation of cholesterol biosynthesis by SREBP (SREBF)"/>
</dbReference>
<dbReference type="Reactome" id="R-HSA-204005">
    <property type="pathway name" value="COPII-mediated vesicle transport"/>
</dbReference>
<dbReference type="Reactome" id="R-HSA-2132295">
    <property type="pathway name" value="MHC class II antigen presentation"/>
</dbReference>
<dbReference type="Reactome" id="R-HSA-5694530">
    <property type="pathway name" value="Cargo concentration in the ER"/>
</dbReference>
<dbReference type="Reactome" id="R-HSA-9705671">
    <property type="pathway name" value="SARS-CoV-2 activates/modulates innate and adaptive immune responses"/>
</dbReference>
<dbReference type="Reactome" id="R-HSA-983170">
    <property type="pathway name" value="Antigen Presentation: Folding, assembly and peptide loading of class I MHC"/>
</dbReference>
<dbReference type="SignaLink" id="O94855"/>
<dbReference type="SIGNOR" id="O94855"/>
<dbReference type="BioGRID-ORCS" id="9871">
    <property type="hits" value="6 hits in 1148 CRISPR screens"/>
</dbReference>
<dbReference type="ChiTaRS" id="SEC24D">
    <property type="organism name" value="human"/>
</dbReference>
<dbReference type="EvolutionaryTrace" id="O94855"/>
<dbReference type="GeneWiki" id="SEC24D"/>
<dbReference type="GenomeRNAi" id="9871"/>
<dbReference type="Pharos" id="O94855">
    <property type="development level" value="Tbio"/>
</dbReference>
<dbReference type="PRO" id="PR:O94855"/>
<dbReference type="Proteomes" id="UP000005640">
    <property type="component" value="Chromosome 4"/>
</dbReference>
<dbReference type="RNAct" id="O94855">
    <property type="molecule type" value="protein"/>
</dbReference>
<dbReference type="Bgee" id="ENSG00000150961">
    <property type="expression patterns" value="Expressed in stromal cell of endometrium and 176 other cell types or tissues"/>
</dbReference>
<dbReference type="ExpressionAtlas" id="O94855">
    <property type="expression patterns" value="baseline and differential"/>
</dbReference>
<dbReference type="GO" id="GO:0030127">
    <property type="term" value="C:COPII vesicle coat"/>
    <property type="evidence" value="ECO:0000314"/>
    <property type="project" value="UniProtKB"/>
</dbReference>
<dbReference type="GO" id="GO:0005829">
    <property type="term" value="C:cytosol"/>
    <property type="evidence" value="ECO:0000304"/>
    <property type="project" value="Reactome"/>
</dbReference>
<dbReference type="GO" id="GO:0070971">
    <property type="term" value="C:endoplasmic reticulum exit site"/>
    <property type="evidence" value="ECO:0000318"/>
    <property type="project" value="GO_Central"/>
</dbReference>
<dbReference type="GO" id="GO:0005789">
    <property type="term" value="C:endoplasmic reticulum membrane"/>
    <property type="evidence" value="ECO:0000304"/>
    <property type="project" value="Reactome"/>
</dbReference>
<dbReference type="GO" id="GO:0012507">
    <property type="term" value="C:ER to Golgi transport vesicle membrane"/>
    <property type="evidence" value="ECO:0000304"/>
    <property type="project" value="Reactome"/>
</dbReference>
<dbReference type="GO" id="GO:0043231">
    <property type="term" value="C:intracellular membrane-bounded organelle"/>
    <property type="evidence" value="ECO:0000314"/>
    <property type="project" value="HPA"/>
</dbReference>
<dbReference type="GO" id="GO:0000149">
    <property type="term" value="F:SNARE binding"/>
    <property type="evidence" value="ECO:0000353"/>
    <property type="project" value="UniProtKB"/>
</dbReference>
<dbReference type="GO" id="GO:0008270">
    <property type="term" value="F:zinc ion binding"/>
    <property type="evidence" value="ECO:0000314"/>
    <property type="project" value="UniProtKB"/>
</dbReference>
<dbReference type="GO" id="GO:0090110">
    <property type="term" value="P:COPII-coated vesicle cargo loading"/>
    <property type="evidence" value="ECO:0000314"/>
    <property type="project" value="UniProtKB"/>
</dbReference>
<dbReference type="GO" id="GO:0006888">
    <property type="term" value="P:endoplasmic reticulum to Golgi vesicle-mediated transport"/>
    <property type="evidence" value="ECO:0000315"/>
    <property type="project" value="UniProtKB"/>
</dbReference>
<dbReference type="GO" id="GO:0001701">
    <property type="term" value="P:in utero embryonic development"/>
    <property type="evidence" value="ECO:0007669"/>
    <property type="project" value="Ensembl"/>
</dbReference>
<dbReference type="GO" id="GO:0006886">
    <property type="term" value="P:intracellular protein transport"/>
    <property type="evidence" value="ECO:0007669"/>
    <property type="project" value="InterPro"/>
</dbReference>
<dbReference type="CDD" id="cd01479">
    <property type="entry name" value="Sec24-like"/>
    <property type="match status" value="1"/>
</dbReference>
<dbReference type="FunFam" id="3.40.20.10:FF:000023">
    <property type="entry name" value="protein transport protein Sec24C isoform X1"/>
    <property type="match status" value="1"/>
</dbReference>
<dbReference type="FunFam" id="3.40.50.410:FF:000020">
    <property type="entry name" value="protein transport protein Sec24D isoform X1"/>
    <property type="match status" value="1"/>
</dbReference>
<dbReference type="FunFam" id="2.30.30.380:FF:000003">
    <property type="entry name" value="SEC24 homolog D, COPII coat complex component"/>
    <property type="match status" value="1"/>
</dbReference>
<dbReference type="FunFam" id="2.60.40.1670:FF:000004">
    <property type="entry name" value="SEC24 homolog D, COPII coat complex component"/>
    <property type="match status" value="1"/>
</dbReference>
<dbReference type="Gene3D" id="2.60.40.1670">
    <property type="entry name" value="beta-sandwich domain of Sec23/24"/>
    <property type="match status" value="1"/>
</dbReference>
<dbReference type="Gene3D" id="1.20.120.730">
    <property type="entry name" value="Sec23/Sec24 helical domain"/>
    <property type="match status" value="1"/>
</dbReference>
<dbReference type="Gene3D" id="3.40.20.10">
    <property type="entry name" value="Severin"/>
    <property type="match status" value="1"/>
</dbReference>
<dbReference type="Gene3D" id="3.40.50.410">
    <property type="entry name" value="von Willebrand factor, type A domain"/>
    <property type="match status" value="1"/>
</dbReference>
<dbReference type="Gene3D" id="2.30.30.380">
    <property type="entry name" value="Zn-finger domain of Sec23/24"/>
    <property type="match status" value="1"/>
</dbReference>
<dbReference type="InterPro" id="IPR029006">
    <property type="entry name" value="ADF-H/Gelsolin-like_dom_sf"/>
</dbReference>
<dbReference type="InterPro" id="IPR007123">
    <property type="entry name" value="Gelsolin-like_dom"/>
</dbReference>
<dbReference type="InterPro" id="IPR036180">
    <property type="entry name" value="Gelsolin-like_dom_sf"/>
</dbReference>
<dbReference type="InterPro" id="IPR006900">
    <property type="entry name" value="Sec23/24_helical_dom"/>
</dbReference>
<dbReference type="InterPro" id="IPR036175">
    <property type="entry name" value="Sec23/24_helical_dom_sf"/>
</dbReference>
<dbReference type="InterPro" id="IPR006896">
    <property type="entry name" value="Sec23/24_trunk_dom"/>
</dbReference>
<dbReference type="InterPro" id="IPR012990">
    <property type="entry name" value="Sec23_24_beta_S"/>
</dbReference>
<dbReference type="InterPro" id="IPR050550">
    <property type="entry name" value="SEC23_SEC24_subfamily"/>
</dbReference>
<dbReference type="InterPro" id="IPR041742">
    <property type="entry name" value="Sec24-like_trunk_dom"/>
</dbReference>
<dbReference type="InterPro" id="IPR036465">
    <property type="entry name" value="vWFA_dom_sf"/>
</dbReference>
<dbReference type="InterPro" id="IPR006895">
    <property type="entry name" value="Znf_Sec23_Sec24"/>
</dbReference>
<dbReference type="PANTHER" id="PTHR13803:SF6">
    <property type="entry name" value="PROTEIN TRANSPORT PROTEIN SEC24D"/>
    <property type="match status" value="1"/>
</dbReference>
<dbReference type="PANTHER" id="PTHR13803">
    <property type="entry name" value="SEC24-RELATED PROTEIN"/>
    <property type="match status" value="1"/>
</dbReference>
<dbReference type="Pfam" id="PF00626">
    <property type="entry name" value="Gelsolin"/>
    <property type="match status" value="1"/>
</dbReference>
<dbReference type="Pfam" id="PF08033">
    <property type="entry name" value="Sec23_BS"/>
    <property type="match status" value="1"/>
</dbReference>
<dbReference type="Pfam" id="PF04815">
    <property type="entry name" value="Sec23_helical"/>
    <property type="match status" value="1"/>
</dbReference>
<dbReference type="Pfam" id="PF04811">
    <property type="entry name" value="Sec23_trunk"/>
    <property type="match status" value="1"/>
</dbReference>
<dbReference type="Pfam" id="PF04810">
    <property type="entry name" value="zf-Sec23_Sec24"/>
    <property type="match status" value="1"/>
</dbReference>
<dbReference type="SUPFAM" id="SSF81995">
    <property type="entry name" value="beta-sandwich domain of Sec23/24"/>
    <property type="match status" value="2"/>
</dbReference>
<dbReference type="SUPFAM" id="SSF82754">
    <property type="entry name" value="C-terminal, gelsolin-like domain of Sec23/24"/>
    <property type="match status" value="1"/>
</dbReference>
<dbReference type="SUPFAM" id="SSF81811">
    <property type="entry name" value="Helical domain of Sec23/24"/>
    <property type="match status" value="1"/>
</dbReference>
<dbReference type="SUPFAM" id="SSF53300">
    <property type="entry name" value="vWA-like"/>
    <property type="match status" value="1"/>
</dbReference>
<feature type="chain" id="PRO_0000205157" description="Protein transport protein Sec24D">
    <location>
        <begin position="1"/>
        <end position="1032"/>
    </location>
</feature>
<feature type="repeat" description="Gelsolin-like" evidence="2">
    <location>
        <begin position="901"/>
        <end position="974"/>
    </location>
</feature>
<feature type="region of interest" description="Disordered" evidence="3">
    <location>
        <begin position="1"/>
        <end position="260"/>
    </location>
</feature>
<feature type="region of interest" description="Zinc finger-like">
    <location>
        <begin position="363"/>
        <end position="388"/>
    </location>
</feature>
<feature type="compositionally biased region" description="Polar residues" evidence="3">
    <location>
        <begin position="102"/>
        <end position="133"/>
    </location>
</feature>
<feature type="compositionally biased region" description="Pro residues" evidence="3">
    <location>
        <begin position="198"/>
        <end position="212"/>
    </location>
</feature>
<feature type="binding site" evidence="17 18 19 21">
    <location>
        <position position="363"/>
    </location>
    <ligand>
        <name>Zn(2+)</name>
        <dbReference type="ChEBI" id="CHEBI:29105"/>
    </ligand>
</feature>
<feature type="binding site" evidence="17 18 19 21">
    <location>
        <position position="366"/>
    </location>
    <ligand>
        <name>Zn(2+)</name>
        <dbReference type="ChEBI" id="CHEBI:29105"/>
    </ligand>
</feature>
<feature type="binding site" evidence="17 18 19 21">
    <location>
        <position position="385"/>
    </location>
    <ligand>
        <name>Zn(2+)</name>
        <dbReference type="ChEBI" id="CHEBI:29105"/>
    </ligand>
</feature>
<feature type="binding site" evidence="17 18 19 21">
    <location>
        <position position="388"/>
    </location>
    <ligand>
        <name>Zn(2+)</name>
        <dbReference type="ChEBI" id="CHEBI:29105"/>
    </ligand>
</feature>
<feature type="modified residue" description="Phosphoserine" evidence="23">
    <location>
        <position position="266"/>
    </location>
</feature>
<feature type="splice variant" id="VSP_035761" description="In isoform 2." evidence="12">
    <original>Q</original>
    <variation>QA</variation>
    <location>
        <position position="224"/>
    </location>
</feature>
<feature type="sequence variant" id="VAR_047472" description="In dbSNP:rs10029206.">
    <original>M</original>
    <variation>T</variation>
    <location>
        <position position="42"/>
    </location>
</feature>
<feature type="sequence variant" id="VAR_047473" description="In dbSNP:rs6844109.">
    <original>P</original>
    <variation>L</variation>
    <location>
        <position position="193"/>
    </location>
</feature>
<feature type="sequence variant" id="VAR_047474" description="In dbSNP:rs11723368.">
    <original>F</original>
    <variation>I</variation>
    <location>
        <position position="496"/>
    </location>
</feature>
<feature type="sequence variant" id="VAR_073658" description="In CLCRP2; dbSNP:rs786204846." evidence="9">
    <original>Q</original>
    <variation>P</variation>
    <location>
        <position position="978"/>
    </location>
</feature>
<feature type="sequence variant" id="VAR_073659" description="In CLCRP2; dbSNP:rs760670617." evidence="9">
    <original>S</original>
    <variation>F</variation>
    <location>
        <position position="1015"/>
    </location>
</feature>
<feature type="sequence conflict" description="In Ref. 1; AAD28756 and 2; BAA34475." evidence="13" ref="1 2">
    <original>P</original>
    <variation>S</variation>
    <location>
        <position position="559"/>
    </location>
</feature>
<feature type="helix" evidence="24">
    <location>
        <begin position="267"/>
        <end position="278"/>
    </location>
</feature>
<feature type="strand" evidence="24">
    <location>
        <begin position="281"/>
        <end position="284"/>
    </location>
</feature>
<feature type="strand" evidence="24">
    <location>
        <begin position="287"/>
        <end position="289"/>
    </location>
</feature>
<feature type="strand" evidence="24">
    <location>
        <begin position="300"/>
        <end position="302"/>
    </location>
</feature>
<feature type="strand" evidence="24">
    <location>
        <begin position="304"/>
        <end position="306"/>
    </location>
</feature>
<feature type="turn" evidence="24">
    <location>
        <begin position="309"/>
        <end position="311"/>
    </location>
</feature>
<feature type="strand" evidence="24">
    <location>
        <begin position="312"/>
        <end position="322"/>
    </location>
</feature>
<feature type="helix" evidence="24">
    <location>
        <begin position="323"/>
        <end position="329"/>
    </location>
</feature>
<feature type="strand" evidence="24">
    <location>
        <begin position="334"/>
        <end position="337"/>
    </location>
</feature>
<feature type="turn" evidence="24">
    <location>
        <begin position="356"/>
        <end position="358"/>
    </location>
</feature>
<feature type="turn" evidence="24">
    <location>
        <begin position="364"/>
        <end position="366"/>
    </location>
</feature>
<feature type="strand" evidence="24">
    <location>
        <begin position="375"/>
        <end position="377"/>
    </location>
</feature>
<feature type="helix" evidence="24">
    <location>
        <begin position="378"/>
        <end position="380"/>
    </location>
</feature>
<feature type="strand" evidence="24">
    <location>
        <begin position="382"/>
        <end position="384"/>
    </location>
</feature>
<feature type="turn" evidence="24">
    <location>
        <begin position="386"/>
        <end position="388"/>
    </location>
</feature>
<feature type="strand" evidence="24">
    <location>
        <begin position="391"/>
        <end position="393"/>
    </location>
</feature>
<feature type="helix" evidence="24">
    <location>
        <begin position="396"/>
        <end position="398"/>
    </location>
</feature>
<feature type="strand" evidence="24">
    <location>
        <begin position="404"/>
        <end position="406"/>
    </location>
</feature>
<feature type="turn" evidence="24">
    <location>
        <begin position="408"/>
        <end position="410"/>
    </location>
</feature>
<feature type="helix" evidence="24">
    <location>
        <begin position="411"/>
        <end position="413"/>
    </location>
</feature>
<feature type="helix" evidence="24">
    <location>
        <begin position="415"/>
        <end position="418"/>
    </location>
</feature>
<feature type="strand" evidence="24">
    <location>
        <begin position="420"/>
        <end position="425"/>
    </location>
</feature>
<feature type="helix" evidence="24">
    <location>
        <begin position="428"/>
        <end position="430"/>
    </location>
</feature>
<feature type="helix" evidence="24">
    <location>
        <begin position="432"/>
        <end position="434"/>
    </location>
</feature>
<feature type="strand" evidence="24">
    <location>
        <begin position="441"/>
        <end position="447"/>
    </location>
</feature>
<feature type="helix" evidence="24">
    <location>
        <begin position="450"/>
        <end position="454"/>
    </location>
</feature>
<feature type="helix" evidence="24">
    <location>
        <begin position="457"/>
        <end position="468"/>
    </location>
</feature>
<feature type="helix" evidence="24">
    <location>
        <begin position="469"/>
        <end position="471"/>
    </location>
</feature>
<feature type="strand" evidence="24">
    <location>
        <begin position="478"/>
        <end position="480"/>
    </location>
</feature>
<feature type="strand" evidence="24">
    <location>
        <begin position="484"/>
        <end position="498"/>
    </location>
</feature>
<feature type="strand" evidence="24">
    <location>
        <begin position="507"/>
        <end position="511"/>
    </location>
</feature>
<feature type="strand" evidence="24">
    <location>
        <begin position="522"/>
        <end position="527"/>
    </location>
</feature>
<feature type="turn" evidence="24">
    <location>
        <begin position="529"/>
        <end position="532"/>
    </location>
</feature>
<feature type="helix" evidence="24">
    <location>
        <begin position="533"/>
        <end position="548"/>
    </location>
</feature>
<feature type="helix" evidence="24">
    <location>
        <begin position="558"/>
        <end position="571"/>
    </location>
</feature>
<feature type="strand" evidence="24">
    <location>
        <begin position="575"/>
        <end position="581"/>
    </location>
</feature>
<feature type="strand" evidence="24">
    <location>
        <begin position="587"/>
        <end position="589"/>
    </location>
</feature>
<feature type="helix" evidence="24">
    <location>
        <begin position="607"/>
        <end position="611"/>
    </location>
</feature>
<feature type="strand" evidence="24">
    <location>
        <begin position="614"/>
        <end position="616"/>
    </location>
</feature>
<feature type="helix" evidence="24">
    <location>
        <begin position="617"/>
        <end position="627"/>
    </location>
</feature>
<feature type="strand" evidence="24">
    <location>
        <begin position="630"/>
        <end position="636"/>
    </location>
</feature>
<feature type="helix" evidence="24">
    <location>
        <begin position="644"/>
        <end position="647"/>
    </location>
</feature>
<feature type="helix" evidence="24">
    <location>
        <begin position="649"/>
        <end position="653"/>
    </location>
</feature>
<feature type="strand" evidence="24">
    <location>
        <begin position="658"/>
        <end position="660"/>
    </location>
</feature>
<feature type="helix" evidence="24">
    <location>
        <begin position="666"/>
        <end position="682"/>
    </location>
</feature>
<feature type="strand" evidence="24">
    <location>
        <begin position="685"/>
        <end position="695"/>
    </location>
</feature>
<feature type="strand" evidence="24">
    <location>
        <begin position="699"/>
        <end position="707"/>
    </location>
</feature>
<feature type="strand" evidence="24">
    <location>
        <begin position="711"/>
        <end position="714"/>
    </location>
</feature>
<feature type="strand" evidence="24">
    <location>
        <begin position="716"/>
        <end position="724"/>
    </location>
</feature>
<feature type="strand" evidence="24">
    <location>
        <begin position="727"/>
        <end position="735"/>
    </location>
</feature>
<feature type="turn" evidence="24">
    <location>
        <begin position="739"/>
        <end position="741"/>
    </location>
</feature>
<feature type="strand" evidence="24">
    <location>
        <begin position="742"/>
        <end position="752"/>
    </location>
</feature>
<feature type="strand" evidence="24">
    <location>
        <begin position="758"/>
        <end position="771"/>
    </location>
</feature>
<feature type="helix" evidence="24">
    <location>
        <begin position="773"/>
        <end position="778"/>
    </location>
</feature>
<feature type="helix" evidence="24">
    <location>
        <begin position="782"/>
        <end position="796"/>
    </location>
</feature>
<feature type="turn" evidence="24">
    <location>
        <begin position="797"/>
        <end position="799"/>
    </location>
</feature>
<feature type="helix" evidence="24">
    <location>
        <begin position="802"/>
        <end position="823"/>
    </location>
</feature>
<feature type="strand" evidence="24">
    <location>
        <begin position="832"/>
        <end position="835"/>
    </location>
</feature>
<feature type="helix" evidence="24">
    <location>
        <begin position="837"/>
        <end position="839"/>
    </location>
</feature>
<feature type="helix" evidence="24">
    <location>
        <begin position="842"/>
        <end position="851"/>
    </location>
</feature>
<feature type="helix" evidence="24">
    <location>
        <begin position="853"/>
        <end position="855"/>
    </location>
</feature>
<feature type="strand" evidence="24">
    <location>
        <begin position="858"/>
        <end position="861"/>
    </location>
</feature>
<feature type="helix" evidence="24">
    <location>
        <begin position="863"/>
        <end position="875"/>
    </location>
</feature>
<feature type="helix" evidence="24">
    <location>
        <begin position="878"/>
        <end position="885"/>
    </location>
</feature>
<feature type="strand" evidence="24">
    <location>
        <begin position="888"/>
        <end position="891"/>
    </location>
</feature>
<feature type="strand" evidence="24">
    <location>
        <begin position="897"/>
        <end position="899"/>
    </location>
</feature>
<feature type="helix" evidence="24">
    <location>
        <begin position="910"/>
        <end position="912"/>
    </location>
</feature>
<feature type="strand" evidence="24">
    <location>
        <begin position="918"/>
        <end position="922"/>
    </location>
</feature>
<feature type="strand" evidence="24">
    <location>
        <begin position="924"/>
        <end position="931"/>
    </location>
</feature>
<feature type="helix" evidence="24">
    <location>
        <begin position="937"/>
        <end position="944"/>
    </location>
</feature>
<feature type="strand" evidence="24">
    <location>
        <begin position="945"/>
        <end position="948"/>
    </location>
</feature>
<feature type="helix" evidence="24">
    <location>
        <begin position="949"/>
        <end position="951"/>
    </location>
</feature>
<feature type="helix" evidence="24">
    <location>
        <begin position="966"/>
        <end position="978"/>
    </location>
</feature>
<feature type="strand" evidence="24">
    <location>
        <begin position="986"/>
        <end position="992"/>
    </location>
</feature>
<feature type="helix" evidence="24">
    <location>
        <begin position="998"/>
        <end position="1001"/>
    </location>
</feature>
<feature type="helix" evidence="24">
    <location>
        <begin position="1016"/>
        <end position="1029"/>
    </location>
</feature>
<protein>
    <recommendedName>
        <fullName evidence="13">Protein transport protein Sec24D</fullName>
    </recommendedName>
    <alternativeName>
        <fullName>SEC24-related protein D</fullName>
    </alternativeName>
</protein>
<organism>
    <name type="scientific">Homo sapiens</name>
    <name type="common">Human</name>
    <dbReference type="NCBI Taxonomy" id="9606"/>
    <lineage>
        <taxon>Eukaryota</taxon>
        <taxon>Metazoa</taxon>
        <taxon>Chordata</taxon>
        <taxon>Craniata</taxon>
        <taxon>Vertebrata</taxon>
        <taxon>Euteleostomi</taxon>
        <taxon>Mammalia</taxon>
        <taxon>Eutheria</taxon>
        <taxon>Euarchontoglires</taxon>
        <taxon>Primates</taxon>
        <taxon>Haplorrhini</taxon>
        <taxon>Catarrhini</taxon>
        <taxon>Hominidae</taxon>
        <taxon>Homo</taxon>
    </lineage>
</organism>
<accession>O94855</accession>
<accession>Q8IYI7</accession>
<keyword id="KW-0002">3D-structure</keyword>
<keyword id="KW-0025">Alternative splicing</keyword>
<keyword id="KW-0989">Craniosynostosis</keyword>
<keyword id="KW-0963">Cytoplasm</keyword>
<keyword id="KW-0968">Cytoplasmic vesicle</keyword>
<keyword id="KW-0225">Disease variant</keyword>
<keyword id="KW-0256">Endoplasmic reticulum</keyword>
<keyword id="KW-0931">ER-Golgi transport</keyword>
<keyword id="KW-0472">Membrane</keyword>
<keyword id="KW-0479">Metal-binding</keyword>
<keyword id="KW-1065">Osteogenesis imperfecta</keyword>
<keyword id="KW-0597">Phosphoprotein</keyword>
<keyword id="KW-0653">Protein transport</keyword>
<keyword id="KW-1267">Proteomics identification</keyword>
<keyword id="KW-1185">Reference proteome</keyword>
<keyword id="KW-0813">Transport</keyword>
<keyword id="KW-0862">Zinc</keyword>
<proteinExistence type="evidence at protein level"/>
<comment type="function">
    <text evidence="5 6 7">Component of the coat protein complex II (COPII) which promotes the formation of transport vesicles from the endoplasmic reticulum (ER). The coat has two main functions, the physical deformation of the endoplasmic reticulum membrane into vesicles and the selection of cargo molecules for their transport to the Golgi complex (PubMed:17499046, PubMed:18843296, PubMed:20427317). Plays a central role in cargo selection within the COPII complex and together with SEC24C may have a different specificity compared to SEC24A and SEC24B (PubMed:17499046, PubMed:18843296, PubMed:20427317). May more specifically package GPI-anchored proteins through the cargo receptor TMED10 (PubMed:20427317). May also be specific for IxM motif-containing cargos like the SNAREs GOSR2 and STX5 (PubMed:18843296).</text>
</comment>
<comment type="subunit">
    <text evidence="5 6 7 8 10 11">COPII is composed of at least five proteins: the Sec23/24 complex, the Sec13/31 complex and Sar1 (PubMed:17499046, PubMed:27551091). Interacts with TMED2 and TMED10 (PubMed:20427317). Interacts with CNIH4 (PubMed:24405750). Interacts with GOSR2 (via IxM motif) and STX5 (via IxM motif); recruits GOSR2 and STX5 into COPII-coated vesicles (PubMed:18843296). Interacts with KCNA3; this interaction is reduced in the presence of KCNE4 (PubMed:27802162).</text>
</comment>
<comment type="interaction">
    <interactant intactId="EBI-748817">
        <id>O94855</id>
    </interactant>
    <interactant intactId="EBI-739737">
        <id>Q01844</id>
        <label>EWSR1</label>
    </interactant>
    <organismsDiffer>false</organismsDiffer>
    <experiments>3</experiments>
</comment>
<comment type="interaction">
    <interactant intactId="EBI-748817">
        <id>O94855</id>
    </interactant>
    <interactant intactId="EBI-81088">
        <id>Q15436</id>
        <label>SEC23A</label>
    </interactant>
    <organismsDiffer>false</organismsDiffer>
    <experiments>5</experiments>
</comment>
<comment type="interaction">
    <interactant intactId="EBI-748817">
        <id>O94855</id>
    </interactant>
    <interactant intactId="EBI-742673">
        <id>Q15437</id>
        <label>SEC23B</label>
    </interactant>
    <organismsDiffer>false</organismsDiffer>
    <experiments>9</experiments>
</comment>
<comment type="interaction">
    <interactant intactId="EBI-748817">
        <id>O94855</id>
    </interactant>
    <interactant intactId="EBI-348469">
        <id>Q15427</id>
        <label>SF3B4</label>
    </interactant>
    <organismsDiffer>false</organismsDiffer>
    <experiments>3</experiments>
</comment>
<comment type="interaction">
    <interactant intactId="EBI-12081096">
        <id>O94855-2</id>
    </interactant>
    <interactant intactId="EBI-81088">
        <id>Q15436</id>
        <label>SEC23A</label>
    </interactant>
    <organismsDiffer>false</organismsDiffer>
    <experiments>3</experiments>
</comment>
<comment type="interaction">
    <interactant intactId="EBI-12081096">
        <id>O94855-2</id>
    </interactant>
    <interactant intactId="EBI-742673">
        <id>Q15437</id>
        <label>SEC23B</label>
    </interactant>
    <organismsDiffer>false</organismsDiffer>
    <experiments>3</experiments>
</comment>
<comment type="subcellular location">
    <subcellularLocation>
        <location evidence="4">Cytoplasmic vesicle</location>
        <location evidence="4">COPII-coated vesicle membrane</location>
        <topology evidence="1">Peripheral membrane protein</topology>
        <orientation evidence="1">Cytoplasmic side</orientation>
    </subcellularLocation>
    <subcellularLocation>
        <location evidence="14">Endoplasmic reticulum membrane</location>
        <topology evidence="1">Peripheral membrane protein</topology>
        <orientation evidence="1">Cytoplasmic side</orientation>
    </subcellularLocation>
    <subcellularLocation>
        <location evidence="1">Cytoplasm</location>
        <location evidence="1">Cytosol</location>
    </subcellularLocation>
</comment>
<comment type="alternative products">
    <event type="alternative splicing"/>
    <isoform>
        <id>O94855-1</id>
        <name>1</name>
        <sequence type="displayed"/>
    </isoform>
    <isoform>
        <id>O94855-2</id>
        <name>2</name>
        <sequence type="described" ref="VSP_035761"/>
    </isoform>
</comment>
<comment type="tissue specificity">
    <text evidence="4">Ubiquitously expressed, with higher amounts in placenta, pancreas, heart and liver.</text>
</comment>
<comment type="disease" evidence="9">
    <disease id="DI-04384">
        <name>Cole-Carpenter syndrome 2</name>
        <acronym>CLCRP2</acronym>
        <description>A form of Cole-Carpenter syndrome, a disorder characterized by features of osteogenesis imperfecta such as bone deformities and severe bone fragility with frequent fractures, in association with craniosynostosis, ocular proptosis, hydrocephalus, growth failure and distinctive facial features. Craniofacial findings include marked frontal bossing, midface hypoplasia, and micrognathia. Despite the craniosynostosis and hydrocephalus, intellectual development is normal. CLCRP2 inheritance is autosomal recessive.</description>
        <dbReference type="MIM" id="616294"/>
    </disease>
    <text>The disease is caused by variants affecting the gene represented in this entry.</text>
</comment>
<comment type="similarity">
    <text evidence="13">Belongs to the SEC23/SEC24 family. SEC24 subfamily.</text>
</comment>
<comment type="sequence caution" evidence="13">
    <conflict type="erroneous initiation">
        <sequence resource="EMBL-CDS" id="BAA34475"/>
    </conflict>
    <text>Extended N-terminus.</text>
</comment>
<name>SC24D_HUMAN</name>
<sequence>MSQQGYVATPPYSQPQPGIGLSPPHYGHYGDPSHTASPTGMMKPAGPLGATATRGMLPPGPPPPGPHQFGQNGAHATGHPPQRFPGPPPVNNVASSHAPYQPSAQSSYPGPISTSSVTQLGSQLSAMQINSYGSGMAPPSQGPPGPLSATSLQTPPRPPQPSILQPGSQVLPPPPTTLNGPGASPLPLPMYRPDGLSGPPPPNAQYQPPPLPGQTLGAGYPPQQANSGPQMAGAQLSYPGGFPGGPAQMAGPPQPQKKLDPDSIPSPIQVIENDRASRGGQVYATNTRGQIPPLVTTDCMIQDQGNASPRFIRCTTYCFPCTSDMAKQAQIPLAAVIKPFATIPSNESPLYLVNHGESGPVRCNRCKAYMCPFMQFIEGGRRYQCGFCNCVNDVPPFYFQHLDHIGRRLDHYEKPELSLGSYEYVATLDYCRKSKPPNPPAFIFMIDVSYSNIKNGLVKLICEELKTMLEKIPKEEQEETSAIRVGFITYNKVLHFFNVKSNLAQPQMMVVTDVGEVFVPLLDGFLVNYQESQSVIHNLLDQIPDMFADSNENETVFAPVIQAGMEALKAADCPGKLFIFHSSLPTAEAPGKLKNRDDKKLVNTDKEKILFQPQTNVYDSLAKDCVAHGCSVTLFLFPSQYVDVASLGLVPQLTGGTLYKYNNFQMHLDRQQFLNDLRNDIEKKIGFDAIMRVRTSTGFRATDFFGGILMNNTTDVEMAAIDCDKAVTVEFKHDDKLSEDSGALIQCAVLYTTISGQRRLRIHNLGLNCSSQLADLYKSCETDALINFFAKSAFKAVLHQPLKVIREILVNQTAHMLACYRKNCASPSAASQLILPDSMKVLPVYMNCLLKNCVLLSRPEISTDERAYQRQLVMTMGVADSQLFFYPQLLPIHTLDVKSTMLPAAVRCSESRLSEEGIFLLANGLHMFLWLGVSSPPELIQGIFNVPSFAHINTDMTLLPEVGNPYSQQLRMIMGIIQQKRPYSMKLTIVKQREQPEMVFRQFLVEDKGLYGGSSYVDFLCCVHKEICQLLN</sequence>
<reference key="1">
    <citation type="journal article" date="1999" name="Biochem. Biophys. Res. Commun.">
        <title>A family of mammalian proteins homologous to yeast Sec24p.</title>
        <authorList>
            <person name="Tang B.L."/>
            <person name="Kausalya J."/>
            <person name="Low D.Y.H."/>
            <person name="Lock M.L."/>
            <person name="Hong W."/>
        </authorList>
    </citation>
    <scope>NUCLEOTIDE SEQUENCE [MRNA] (ISOFORM 1)</scope>
    <scope>SUBCELLULAR LOCATION</scope>
    <scope>TISSUE SPECIFICITY</scope>
    <source>
        <tissue>Pancreas</tissue>
    </source>
</reference>
<reference key="2">
    <citation type="journal article" date="1998" name="DNA Res.">
        <title>Prediction of the coding sequences of unidentified human genes. XI. The complete sequences of 100 new cDNA clones from brain which code for large proteins in vitro.</title>
        <authorList>
            <person name="Nagase T."/>
            <person name="Ishikawa K."/>
            <person name="Suyama M."/>
            <person name="Kikuno R."/>
            <person name="Miyajima N."/>
            <person name="Tanaka A."/>
            <person name="Kotani H."/>
            <person name="Nomura N."/>
            <person name="Ohara O."/>
        </authorList>
    </citation>
    <scope>NUCLEOTIDE SEQUENCE [LARGE SCALE MRNA] (ISOFORM 1)</scope>
    <source>
        <tissue>Brain</tissue>
    </source>
</reference>
<reference key="3">
    <citation type="submission" date="2005-07" db="EMBL/GenBank/DDBJ databases">
        <authorList>
            <person name="Mural R.J."/>
            <person name="Istrail S."/>
            <person name="Sutton G.G."/>
            <person name="Florea L."/>
            <person name="Halpern A.L."/>
            <person name="Mobarry C.M."/>
            <person name="Lippert R."/>
            <person name="Walenz B."/>
            <person name="Shatkay H."/>
            <person name="Dew I."/>
            <person name="Miller J.R."/>
            <person name="Flanigan M.J."/>
            <person name="Edwards N.J."/>
            <person name="Bolanos R."/>
            <person name="Fasulo D."/>
            <person name="Halldorsson B.V."/>
            <person name="Hannenhalli S."/>
            <person name="Turner R."/>
            <person name="Yooseph S."/>
            <person name="Lu F."/>
            <person name="Nusskern D.R."/>
            <person name="Shue B.C."/>
            <person name="Zheng X.H."/>
            <person name="Zhong F."/>
            <person name="Delcher A.L."/>
            <person name="Huson D.H."/>
            <person name="Kravitz S.A."/>
            <person name="Mouchard L."/>
            <person name="Reinert K."/>
            <person name="Remington K.A."/>
            <person name="Clark A.G."/>
            <person name="Waterman M.S."/>
            <person name="Eichler E.E."/>
            <person name="Adams M.D."/>
            <person name="Hunkapiller M.W."/>
            <person name="Myers E.W."/>
            <person name="Venter J.C."/>
        </authorList>
    </citation>
    <scope>NUCLEOTIDE SEQUENCE [LARGE SCALE GENOMIC DNA]</scope>
</reference>
<reference key="4">
    <citation type="journal article" date="2004" name="Genome Res.">
        <title>The status, quality, and expansion of the NIH full-length cDNA project: the Mammalian Gene Collection (MGC).</title>
        <authorList>
            <consortium name="The MGC Project Team"/>
        </authorList>
    </citation>
    <scope>NUCLEOTIDE SEQUENCE [LARGE SCALE MRNA] (ISOFORM 2)</scope>
    <source>
        <tissue>Lymph</tissue>
    </source>
</reference>
<reference key="5">
    <citation type="journal article" date="2007" name="Mol. Cell">
        <title>The transport signal on Sec22 for packaging into COPII-coated vesicles is a conformational epitope.</title>
        <authorList>
            <person name="Mancias J.D."/>
            <person name="Goldberg J."/>
        </authorList>
    </citation>
    <scope>FUNCTION</scope>
    <scope>SUBUNIT</scope>
</reference>
<reference key="6">
    <citation type="journal article" date="2010" name="J. Cell Sci.">
        <title>Selective export of human GPI-anchored proteins from the endoplasmic reticulum.</title>
        <authorList>
            <person name="Bonnon C."/>
            <person name="Wendeler M.W."/>
            <person name="Paccaud J.P."/>
            <person name="Hauri H.P."/>
        </authorList>
    </citation>
    <scope>FUNCTION</scope>
    <scope>INTERACTION WITH TMED2 AND TMED10</scope>
</reference>
<reference key="7">
    <citation type="journal article" date="2011" name="BMC Syst. Biol.">
        <title>Initial characterization of the human central proteome.</title>
        <authorList>
            <person name="Burkard T.R."/>
            <person name="Planyavsky M."/>
            <person name="Kaupe I."/>
            <person name="Breitwieser F.P."/>
            <person name="Buerckstuemmer T."/>
            <person name="Bennett K.L."/>
            <person name="Superti-Furga G."/>
            <person name="Colinge J."/>
        </authorList>
    </citation>
    <scope>IDENTIFICATION BY MASS SPECTROMETRY [LARGE SCALE ANALYSIS]</scope>
</reference>
<reference key="8">
    <citation type="journal article" date="2013" name="J. Proteome Res.">
        <title>Toward a comprehensive characterization of a human cancer cell phosphoproteome.</title>
        <authorList>
            <person name="Zhou H."/>
            <person name="Di Palma S."/>
            <person name="Preisinger C."/>
            <person name="Peng M."/>
            <person name="Polat A.N."/>
            <person name="Heck A.J."/>
            <person name="Mohammed S."/>
        </authorList>
    </citation>
    <scope>PHOSPHORYLATION [LARGE SCALE ANALYSIS] AT SER-266</scope>
    <scope>IDENTIFICATION BY MASS SPECTROMETRY [LARGE SCALE ANALYSIS]</scope>
    <source>
        <tissue>Erythroleukemia</tissue>
    </source>
</reference>
<reference key="9">
    <citation type="journal article" date="2014" name="J. Proteomics">
        <title>An enzyme assisted RP-RPLC approach for in-depth analysis of human liver phosphoproteome.</title>
        <authorList>
            <person name="Bian Y."/>
            <person name="Song C."/>
            <person name="Cheng K."/>
            <person name="Dong M."/>
            <person name="Wang F."/>
            <person name="Huang J."/>
            <person name="Sun D."/>
            <person name="Wang L."/>
            <person name="Ye M."/>
            <person name="Zou H."/>
        </authorList>
    </citation>
    <scope>IDENTIFICATION BY MASS SPECTROMETRY [LARGE SCALE ANALYSIS]</scope>
    <source>
        <tissue>Liver</tissue>
    </source>
</reference>
<reference key="10">
    <citation type="journal article" date="2014" name="Traffic">
        <title>CNIH4 interacts with newly synthesized GPCR and controls their export from the endoplasmic reticulum.</title>
        <authorList>
            <person name="Sauvageau E."/>
            <person name="Rochdi M.D."/>
            <person name="Oueslati M."/>
            <person name="Hamdan F.F."/>
            <person name="Percherancier Y."/>
            <person name="Simpson J.C."/>
            <person name="Pepperkok R."/>
            <person name="Bouvier M."/>
        </authorList>
    </citation>
    <scope>INTERACTION WITH CNIH4</scope>
</reference>
<reference key="11">
    <citation type="journal article" date="2015" name="Am. J. Hum. Genet.">
        <title>Mutations in SEC24D, encoding a component of the COPII machinery, cause a syndromic form of osteogenesis imperfecta.</title>
        <authorList>
            <person name="Garbes L."/>
            <person name="Kim K."/>
            <person name="Riess A."/>
            <person name="Hoyer-Kuhn H."/>
            <person name="Beleggia F."/>
            <person name="Bevot A."/>
            <person name="Kim M.J."/>
            <person name="Huh Y.H."/>
            <person name="Kweon H.S."/>
            <person name="Savarirayan R."/>
            <person name="Amor D."/>
            <person name="Kakadia P.M."/>
            <person name="Lindig T."/>
            <person name="Kagan K.O."/>
            <person name="Becker J."/>
            <person name="Boyadjiev S.A."/>
            <person name="Wollnik B."/>
            <person name="Semler O."/>
            <person name="Bohlander S.K."/>
            <person name="Kim J."/>
            <person name="Netzer C."/>
        </authorList>
    </citation>
    <scope>INVOLVEMENT IN CLCRP2</scope>
    <scope>VARIANTS CLCRP2 PRO-978 AND PHE-1015</scope>
</reference>
<reference key="12">
    <citation type="journal article" date="2015" name="Proteomics">
        <title>N-terminome analysis of the human mitochondrial proteome.</title>
        <authorList>
            <person name="Vaca Jacome A.S."/>
            <person name="Rabilloud T."/>
            <person name="Schaeffer-Reiss C."/>
            <person name="Rompais M."/>
            <person name="Ayoub D."/>
            <person name="Lane L."/>
            <person name="Bairoch A."/>
            <person name="Van Dorsselaer A."/>
            <person name="Carapito C."/>
        </authorList>
    </citation>
    <scope>IDENTIFICATION BY MASS SPECTROMETRY [LARGE SCALE ANALYSIS]</scope>
</reference>
<reference key="13">
    <citation type="journal article" date="2016" name="J. Cell Sci.">
        <title>The C-terminal domain of Kv1.3 regulates functional interactions with the KCNE4 subunit.</title>
        <authorList>
            <person name="Sole L."/>
            <person name="Roig S.R."/>
            <person name="Vallejo-Gracia A."/>
            <person name="Serrano-Albarras A."/>
            <person name="Martinez-Marmol R."/>
            <person name="Tamkun M.M."/>
            <person name="Felipe A."/>
        </authorList>
    </citation>
    <scope>INTERACTION WITH KCNA3</scope>
</reference>
<reference evidence="17 18" key="14">
    <citation type="journal article" date="2008" name="EMBO J.">
        <title>Structural basis of cargo membrane protein discrimination by the human COPII coat machinery.</title>
        <authorList>
            <person name="Mancias J.D."/>
            <person name="Goldberg J."/>
        </authorList>
    </citation>
    <scope>X-RAY CRYSTALLOGRAPHY (2.70 ANGSTROMS) OF 266-1032 IN COMPLEX WITH CARGO PEPTIDES; SEC23A AND ZINC</scope>
    <scope>FUNCTION</scope>
    <scope>INTERACTION WITH GOSR2 AND STX5</scope>
</reference>
<reference evidence="19 20 21 22" key="15">
    <citation type="journal article" date="2016" name="Proc. Natl. Acad. Sci. U.S.A.">
        <title>TANGO1/cTAGE5 receptor as a polyvalent template for assembly of large COPII coats.</title>
        <authorList>
            <person name="Ma W."/>
            <person name="Goldberg J."/>
        </authorList>
    </citation>
    <scope>X-RAY CRYSTALLOGRAPHY (3.20 ANGSTROMS) OF 266-1032 IN COMPLEX WITH SEC23A AND ZINC</scope>
    <scope>INTERACTION WITH SEC23A</scope>
</reference>
<gene>
    <name evidence="16" type="primary">SEC24D</name>
    <name evidence="15" type="synonym">KIAA0755</name>
</gene>
<evidence type="ECO:0000250" key="1">
    <source>
        <dbReference type="UniProtKB" id="P53992"/>
    </source>
</evidence>
<evidence type="ECO:0000255" key="2"/>
<evidence type="ECO:0000256" key="3">
    <source>
        <dbReference type="SAM" id="MobiDB-lite"/>
    </source>
</evidence>
<evidence type="ECO:0000269" key="4">
    <source>
    </source>
</evidence>
<evidence type="ECO:0000269" key="5">
    <source>
    </source>
</evidence>
<evidence type="ECO:0000269" key="6">
    <source>
    </source>
</evidence>
<evidence type="ECO:0000269" key="7">
    <source>
    </source>
</evidence>
<evidence type="ECO:0000269" key="8">
    <source>
    </source>
</evidence>
<evidence type="ECO:0000269" key="9">
    <source>
    </source>
</evidence>
<evidence type="ECO:0000269" key="10">
    <source>
    </source>
</evidence>
<evidence type="ECO:0000269" key="11">
    <source>
    </source>
</evidence>
<evidence type="ECO:0000303" key="12">
    <source>
    </source>
</evidence>
<evidence type="ECO:0000305" key="13"/>
<evidence type="ECO:0000305" key="14">
    <source>
    </source>
</evidence>
<evidence type="ECO:0000312" key="15">
    <source>
        <dbReference type="EMBL" id="BAA34475.2"/>
    </source>
</evidence>
<evidence type="ECO:0000312" key="16">
    <source>
        <dbReference type="HGNC" id="HGNC:10706"/>
    </source>
</evidence>
<evidence type="ECO:0007744" key="17">
    <source>
        <dbReference type="PDB" id="3EFO"/>
    </source>
</evidence>
<evidence type="ECO:0007744" key="18">
    <source>
        <dbReference type="PDB" id="3EG9"/>
    </source>
</evidence>
<evidence type="ECO:0007744" key="19">
    <source>
        <dbReference type="PDB" id="5KYU"/>
    </source>
</evidence>
<evidence type="ECO:0007744" key="20">
    <source>
        <dbReference type="PDB" id="5KYW"/>
    </source>
</evidence>
<evidence type="ECO:0007744" key="21">
    <source>
        <dbReference type="PDB" id="5KYX"/>
    </source>
</evidence>
<evidence type="ECO:0007744" key="22">
    <source>
        <dbReference type="PDB" id="5KYY"/>
    </source>
</evidence>
<evidence type="ECO:0007744" key="23">
    <source>
    </source>
</evidence>
<evidence type="ECO:0007829" key="24">
    <source>
        <dbReference type="PDB" id="3EFO"/>
    </source>
</evidence>